<keyword id="KW-0067">ATP-binding</keyword>
<keyword id="KW-0378">Hydrolase</keyword>
<keyword id="KW-0547">Nucleotide-binding</keyword>
<keyword id="KW-0574">Periplasm</keyword>
<keyword id="KW-0645">Protease</keyword>
<keyword id="KW-1185">Reference proteome</keyword>
<keyword id="KW-0732">Signal</keyword>
<keyword id="KW-0788">Thiol protease</keyword>
<organism>
    <name type="scientific">Pseudomonas aeruginosa (strain ATCC 15692 / DSM 22644 / CIP 104116 / JCM 14847 / LMG 12228 / 1C / PRS 101 / PAO1)</name>
    <dbReference type="NCBI Taxonomy" id="208964"/>
    <lineage>
        <taxon>Bacteria</taxon>
        <taxon>Pseudomonadati</taxon>
        <taxon>Pseudomonadota</taxon>
        <taxon>Gammaproteobacteria</taxon>
        <taxon>Pseudomonadales</taxon>
        <taxon>Pseudomonadaceae</taxon>
        <taxon>Pseudomonas</taxon>
    </lineage>
</organism>
<proteinExistence type="inferred from homology"/>
<sequence length="226" mass="25272">MRTLILSLLLLVDLTTQAATLGFPALPGGGLVYKQVQSIRERRFADLVEQKTDFSCGAAALATILEKAYGAPLDEQAVIQGMLAHADPEIVRTQGFSMLDMKRYVESMGMRARGYRIEAAQLEQLKIPAIVLMEIRGYKHFVVLQRTQGEYVYVGDPALGHKRYALTEFAKGWNGIVFAVIGQGYDRGNPLLTPPEPLTARNRLDRFKPVRDAELMEFGFIQSDFF</sequence>
<feature type="signal peptide" evidence="1">
    <location>
        <begin position="1"/>
        <end position="18"/>
    </location>
</feature>
<feature type="chain" id="PRO_5004326972" description="Probable functional amyloid protease FapD" evidence="1">
    <location>
        <begin position="19"/>
        <end position="226"/>
    </location>
</feature>
<feature type="domain" description="Peptidase C39" evidence="2">
    <location>
        <begin position="50"/>
        <end position="180"/>
    </location>
</feature>
<feature type="active site" evidence="2">
    <location>
        <position position="56"/>
    </location>
</feature>
<accession>Q9I2F1</accession>
<evidence type="ECO:0000255" key="1"/>
<evidence type="ECO:0000255" key="2">
    <source>
        <dbReference type="PROSITE-ProRule" id="PRU00362"/>
    </source>
</evidence>
<evidence type="ECO:0000269" key="3">
    <source>
    </source>
</evidence>
<evidence type="ECO:0000303" key="4">
    <source>
    </source>
</evidence>
<evidence type="ECO:0000305" key="5"/>
<evidence type="ECO:0000305" key="6">
    <source>
    </source>
</evidence>
<evidence type="ECO:0000312" key="7">
    <source>
        <dbReference type="EMBL" id="AAG05341.1"/>
    </source>
</evidence>
<gene>
    <name evidence="4" type="primary">fapD</name>
    <name evidence="7" type="ordered locus">PA1953</name>
</gene>
<dbReference type="EC" id="3.4.22.-" evidence="2"/>
<dbReference type="EMBL" id="AE004091">
    <property type="protein sequence ID" value="AAG05341.1"/>
    <property type="molecule type" value="Genomic_DNA"/>
</dbReference>
<dbReference type="PIR" id="H83400">
    <property type="entry name" value="H83400"/>
</dbReference>
<dbReference type="RefSeq" id="NP_250643.1">
    <property type="nucleotide sequence ID" value="NC_002516.2"/>
</dbReference>
<dbReference type="RefSeq" id="WP_003113481.1">
    <property type="nucleotide sequence ID" value="NZ_QZGE01000030.1"/>
</dbReference>
<dbReference type="SMR" id="Q9I2F1"/>
<dbReference type="STRING" id="208964.PA1953"/>
<dbReference type="PaxDb" id="208964-PA1953"/>
<dbReference type="DNASU" id="880801"/>
<dbReference type="GeneID" id="880801"/>
<dbReference type="KEGG" id="pae:PA1953"/>
<dbReference type="PATRIC" id="fig|208964.12.peg.2035"/>
<dbReference type="PseudoCAP" id="PA1953"/>
<dbReference type="HOGENOM" id="CLU_092029_0_1_6"/>
<dbReference type="InParanoid" id="Q9I2F1"/>
<dbReference type="OrthoDB" id="13401at2"/>
<dbReference type="PhylomeDB" id="Q9I2F1"/>
<dbReference type="BioCyc" id="PAER208964:G1FZ6-1991-MONOMER"/>
<dbReference type="Proteomes" id="UP000002438">
    <property type="component" value="Chromosome"/>
</dbReference>
<dbReference type="GO" id="GO:0016020">
    <property type="term" value="C:membrane"/>
    <property type="evidence" value="ECO:0007669"/>
    <property type="project" value="InterPro"/>
</dbReference>
<dbReference type="GO" id="GO:0042597">
    <property type="term" value="C:periplasmic space"/>
    <property type="evidence" value="ECO:0007669"/>
    <property type="project" value="UniProtKB-SubCell"/>
</dbReference>
<dbReference type="GO" id="GO:0005524">
    <property type="term" value="F:ATP binding"/>
    <property type="evidence" value="ECO:0007669"/>
    <property type="project" value="UniProtKB-KW"/>
</dbReference>
<dbReference type="GO" id="GO:0008234">
    <property type="term" value="F:cysteine-type peptidase activity"/>
    <property type="evidence" value="ECO:0007669"/>
    <property type="project" value="UniProtKB-KW"/>
</dbReference>
<dbReference type="GO" id="GO:1990000">
    <property type="term" value="P:amyloid fibril formation"/>
    <property type="evidence" value="ECO:0000315"/>
    <property type="project" value="PseudoCAP"/>
</dbReference>
<dbReference type="GO" id="GO:0006508">
    <property type="term" value="P:proteolysis"/>
    <property type="evidence" value="ECO:0007669"/>
    <property type="project" value="UniProtKB-KW"/>
</dbReference>
<dbReference type="CDD" id="cd02423">
    <property type="entry name" value="Peptidase_C39G"/>
    <property type="match status" value="1"/>
</dbReference>
<dbReference type="FunFam" id="3.90.70.10:FF:000565">
    <property type="entry name" value="Putative ABC transporter ATP-binding MG390"/>
    <property type="match status" value="1"/>
</dbReference>
<dbReference type="Gene3D" id="3.90.70.10">
    <property type="entry name" value="Cysteine proteinases"/>
    <property type="match status" value="1"/>
</dbReference>
<dbReference type="InterPro" id="IPR005074">
    <property type="entry name" value="Peptidase_C39"/>
</dbReference>
<dbReference type="Pfam" id="PF03412">
    <property type="entry name" value="Peptidase_C39"/>
    <property type="match status" value="1"/>
</dbReference>
<dbReference type="PROSITE" id="PS50990">
    <property type="entry name" value="PEPTIDASE_C39"/>
    <property type="match status" value="1"/>
</dbReference>
<name>FAPD_PSEAE</name>
<protein>
    <recommendedName>
        <fullName evidence="5">Probable functional amyloid protease FapD</fullName>
        <ecNumber evidence="2">3.4.22.-</ecNumber>
    </recommendedName>
    <alternativeName>
        <fullName evidence="5">Probable fibril-associated protease FapD</fullName>
    </alternativeName>
</protein>
<reference evidence="7" key="1">
    <citation type="journal article" date="2000" name="Nature">
        <title>Complete genome sequence of Pseudomonas aeruginosa PAO1, an opportunistic pathogen.</title>
        <authorList>
            <person name="Stover C.K."/>
            <person name="Pham X.-Q.T."/>
            <person name="Erwin A.L."/>
            <person name="Mizoguchi S.D."/>
            <person name="Warrener P."/>
            <person name="Hickey M.J."/>
            <person name="Brinkman F.S.L."/>
            <person name="Hufnagle W.O."/>
            <person name="Kowalik D.J."/>
            <person name="Lagrou M."/>
            <person name="Garber R.L."/>
            <person name="Goltry L."/>
            <person name="Tolentino E."/>
            <person name="Westbrock-Wadman S."/>
            <person name="Yuan Y."/>
            <person name="Brody L.L."/>
            <person name="Coulter S.N."/>
            <person name="Folger K.R."/>
            <person name="Kas A."/>
            <person name="Larbig K."/>
            <person name="Lim R.M."/>
            <person name="Smith K.A."/>
            <person name="Spencer D.H."/>
            <person name="Wong G.K.-S."/>
            <person name="Wu Z."/>
            <person name="Paulsen I.T."/>
            <person name="Reizer J."/>
            <person name="Saier M.H. Jr."/>
            <person name="Hancock R.E.W."/>
            <person name="Lory S."/>
            <person name="Olson M.V."/>
        </authorList>
    </citation>
    <scope>NUCLEOTIDE SEQUENCE [LARGE SCALE GENOMIC DNA]</scope>
    <source>
        <strain>ATCC 15692 / DSM 22644 / CIP 104116 / JCM 14847 / LMG 12228 / 1C / PRS 101 / PAO1</strain>
    </source>
</reference>
<reference key="2">
    <citation type="journal article" date="2013" name="MicrobiologyOpen">
        <title>Expression of Fap amyloids in Pseudomonas aeruginosa, P. fluorescens, and P. putida results in aggregation and increased biofilm formation.</title>
        <authorList>
            <person name="Dueholm M.S."/>
            <person name="Soendergaard M.T."/>
            <person name="Nilsson M."/>
            <person name="Christiansen G."/>
            <person name="Stensballe A."/>
            <person name="Overgaard M.T."/>
            <person name="Givskov M."/>
            <person name="Tolker-Nielsen T."/>
            <person name="Otzen D.E."/>
            <person name="Nielsen P.H."/>
        </authorList>
    </citation>
    <scope>FUNCTION</scope>
    <scope>POSSIBLE SUBCELLULAR LOCATION</scope>
    <scope>DISRUPTION PHENOTYPE</scope>
    <source>
        <strain>ATCC 15692 / DSM 22644 / CIP 104116 / JCM 14847 / LMG 12228 / 1C / PRS 101 / PAO1</strain>
    </source>
</reference>
<comment type="function">
    <text evidence="3 6">Probable protease that might be involved in processing fibril precursors (Probable) (PubMed:23504942). Upon overexpression of the endogenous six-gene locus (fapA-fapF), cells form large clumps during liquid growth, make large amounts of biofilm and produce amyloid fibrils.</text>
</comment>
<comment type="subcellular location">
    <subcellularLocation>
        <location evidence="6">Periplasm</location>
    </subcellularLocation>
</comment>
<comment type="disruption phenotype">
    <text evidence="3">Deletion of the entire fapA-fapF six-gene locus shows no visible growth phenotype.</text>
</comment>
<comment type="similarity">
    <text evidence="5">Belongs to the FapD family.</text>
</comment>